<evidence type="ECO:0000250" key="1"/>
<evidence type="ECO:0000255" key="2"/>
<evidence type="ECO:0000255" key="3">
    <source>
        <dbReference type="PROSITE-ProRule" id="PRU00048"/>
    </source>
</evidence>
<evidence type="ECO:0000255" key="4">
    <source>
        <dbReference type="PROSITE-ProRule" id="PRU01118"/>
    </source>
</evidence>
<evidence type="ECO:0000305" key="5"/>
<keyword id="KW-0961">Cell wall biogenesis/degradation</keyword>
<keyword id="KW-0378">Hydrolase</keyword>
<keyword id="KW-0964">Secreted</keyword>
<keyword id="KW-0732">Signal</keyword>
<proteinExistence type="inferred from homology"/>
<accession>Q6G9W6</accession>
<reference key="1">
    <citation type="journal article" date="2004" name="Proc. Natl. Acad. Sci. U.S.A.">
        <title>Complete genomes of two clinical Staphylococcus aureus strains: evidence for the rapid evolution of virulence and drug resistance.</title>
        <authorList>
            <person name="Holden M.T.G."/>
            <person name="Feil E.J."/>
            <person name="Lindsay J.A."/>
            <person name="Peacock S.J."/>
            <person name="Day N.P.J."/>
            <person name="Enright M.C."/>
            <person name="Foster T.J."/>
            <person name="Moore C.E."/>
            <person name="Hurst L."/>
            <person name="Atkin R."/>
            <person name="Barron A."/>
            <person name="Bason N."/>
            <person name="Bentley S.D."/>
            <person name="Chillingworth C."/>
            <person name="Chillingworth T."/>
            <person name="Churcher C."/>
            <person name="Clark L."/>
            <person name="Corton C."/>
            <person name="Cronin A."/>
            <person name="Doggett J."/>
            <person name="Dowd L."/>
            <person name="Feltwell T."/>
            <person name="Hance Z."/>
            <person name="Harris B."/>
            <person name="Hauser H."/>
            <person name="Holroyd S."/>
            <person name="Jagels K."/>
            <person name="James K.D."/>
            <person name="Lennard N."/>
            <person name="Line A."/>
            <person name="Mayes R."/>
            <person name="Moule S."/>
            <person name="Mungall K."/>
            <person name="Ormond D."/>
            <person name="Quail M.A."/>
            <person name="Rabbinowitsch E."/>
            <person name="Rutherford K.M."/>
            <person name="Sanders M."/>
            <person name="Sharp S."/>
            <person name="Simmonds M."/>
            <person name="Stevens K."/>
            <person name="Whitehead S."/>
            <person name="Barrell B.G."/>
            <person name="Spratt B.G."/>
            <person name="Parkhill J."/>
        </authorList>
    </citation>
    <scope>NUCLEOTIDE SEQUENCE [LARGE SCALE GENOMIC DNA]</scope>
    <source>
        <strain>MSSA476</strain>
    </source>
</reference>
<gene>
    <name type="primary">lytN</name>
    <name type="ordered locus">SAS1181</name>
</gene>
<sequence length="383" mass="43167">MFVYYCKECFIMNKQQSKVRYSIRKVSIGILSISIGMFLALGMSNKAYADEIDKSKDFTRGYEQNVFAKSELNANKNTTKDKIKNEGAVKTSDTSLKLDNKSAISNGNEINQDIKISNTPKNSSQGNNLVINNNEPTKEIKIANLEAQNSNQKKTNKVTNNYFGYYSFREAPKTQIYTVKKGDTLSAIALKYKTTVSNIQNTNNIANPNLIFIGQKLKVPMTPLVEPKPKTVSSNNKSNSNSSTLNYLKTLENRGWDFDGSYGWQCFDLVNVYWNHLYGHGLKGYGAKDIPYANNFNSEAKIYHNTPTFKAEPGDLVVFSGRFGGGYGHTAIVLNGDYDGKLMKFQSLDQNWNNGGWRKAEVAHKVVHNYENDMIFIRPFKKA</sequence>
<organism>
    <name type="scientific">Staphylococcus aureus (strain MSSA476)</name>
    <dbReference type="NCBI Taxonomy" id="282459"/>
    <lineage>
        <taxon>Bacteria</taxon>
        <taxon>Bacillati</taxon>
        <taxon>Bacillota</taxon>
        <taxon>Bacilli</taxon>
        <taxon>Bacillales</taxon>
        <taxon>Staphylococcaceae</taxon>
        <taxon>Staphylococcus</taxon>
    </lineage>
</organism>
<feature type="signal peptide" evidence="2">
    <location>
        <begin position="1"/>
        <end position="49"/>
    </location>
</feature>
<feature type="chain" id="PRO_0000227565" description="Probable cell wall hydrolase LytN">
    <location>
        <begin position="50"/>
        <end position="383"/>
    </location>
</feature>
<feature type="domain" description="LysM" evidence="4">
    <location>
        <begin position="175"/>
        <end position="219"/>
    </location>
</feature>
<feature type="domain" description="Peptidase C51" evidence="3">
    <location>
        <begin position="241"/>
        <end position="378"/>
    </location>
</feature>
<dbReference type="EC" id="3.-.-.-"/>
<dbReference type="EMBL" id="BX571857">
    <property type="protein sequence ID" value="CAG42958.1"/>
    <property type="status" value="ALT_INIT"/>
    <property type="molecule type" value="Genomic_DNA"/>
</dbReference>
<dbReference type="SMR" id="Q6G9W6"/>
<dbReference type="CAZy" id="CBM50">
    <property type="family name" value="Carbohydrate-Binding Module Family 50"/>
</dbReference>
<dbReference type="KEGG" id="sas:SAS1181"/>
<dbReference type="HOGENOM" id="CLU_060961_0_0_9"/>
<dbReference type="GO" id="GO:0005576">
    <property type="term" value="C:extracellular region"/>
    <property type="evidence" value="ECO:0007669"/>
    <property type="project" value="UniProtKB-SubCell"/>
</dbReference>
<dbReference type="GO" id="GO:0016787">
    <property type="term" value="F:hydrolase activity"/>
    <property type="evidence" value="ECO:0007669"/>
    <property type="project" value="UniProtKB-KW"/>
</dbReference>
<dbReference type="GO" id="GO:0008932">
    <property type="term" value="F:lytic endotransglycosylase activity"/>
    <property type="evidence" value="ECO:0007669"/>
    <property type="project" value="TreeGrafter"/>
</dbReference>
<dbReference type="GO" id="GO:0071555">
    <property type="term" value="P:cell wall organization"/>
    <property type="evidence" value="ECO:0007669"/>
    <property type="project" value="UniProtKB-KW"/>
</dbReference>
<dbReference type="CDD" id="cd00118">
    <property type="entry name" value="LysM"/>
    <property type="match status" value="1"/>
</dbReference>
<dbReference type="FunFam" id="3.10.350.10:FF:000021">
    <property type="entry name" value="Probable cell wall hydrolase LytN"/>
    <property type="match status" value="1"/>
</dbReference>
<dbReference type="FunFam" id="3.90.1720.10:FF:000015">
    <property type="entry name" value="Probable cell wall hydrolase LytN"/>
    <property type="match status" value="1"/>
</dbReference>
<dbReference type="Gene3D" id="3.90.1720.10">
    <property type="entry name" value="endopeptidase domain like (from Nostoc punctiforme)"/>
    <property type="match status" value="1"/>
</dbReference>
<dbReference type="Gene3D" id="3.10.350.10">
    <property type="entry name" value="LysM domain"/>
    <property type="match status" value="1"/>
</dbReference>
<dbReference type="InterPro" id="IPR007921">
    <property type="entry name" value="CHAP_dom"/>
</dbReference>
<dbReference type="InterPro" id="IPR018392">
    <property type="entry name" value="LysM_dom"/>
</dbReference>
<dbReference type="InterPro" id="IPR036779">
    <property type="entry name" value="LysM_dom_sf"/>
</dbReference>
<dbReference type="InterPro" id="IPR038765">
    <property type="entry name" value="Papain-like_cys_pep_sf"/>
</dbReference>
<dbReference type="InterPro" id="IPR005877">
    <property type="entry name" value="YSIRK_signal_dom"/>
</dbReference>
<dbReference type="NCBIfam" id="TIGR01168">
    <property type="entry name" value="YSIRK_signal"/>
    <property type="match status" value="1"/>
</dbReference>
<dbReference type="PANTHER" id="PTHR33734">
    <property type="entry name" value="LYSM DOMAIN-CONTAINING GPI-ANCHORED PROTEIN 2"/>
    <property type="match status" value="1"/>
</dbReference>
<dbReference type="PANTHER" id="PTHR33734:SF22">
    <property type="entry name" value="MEMBRANE-BOUND LYTIC MUREIN TRANSGLYCOSYLASE D"/>
    <property type="match status" value="1"/>
</dbReference>
<dbReference type="Pfam" id="PF05257">
    <property type="entry name" value="CHAP"/>
    <property type="match status" value="1"/>
</dbReference>
<dbReference type="Pfam" id="PF01476">
    <property type="entry name" value="LysM"/>
    <property type="match status" value="1"/>
</dbReference>
<dbReference type="SMART" id="SM00257">
    <property type="entry name" value="LysM"/>
    <property type="match status" value="1"/>
</dbReference>
<dbReference type="SUPFAM" id="SSF54001">
    <property type="entry name" value="Cysteine proteinases"/>
    <property type="match status" value="1"/>
</dbReference>
<dbReference type="SUPFAM" id="SSF54106">
    <property type="entry name" value="LysM domain"/>
    <property type="match status" value="1"/>
</dbReference>
<dbReference type="PROSITE" id="PS50911">
    <property type="entry name" value="CHAP"/>
    <property type="match status" value="1"/>
</dbReference>
<dbReference type="PROSITE" id="PS51782">
    <property type="entry name" value="LYSM"/>
    <property type="match status" value="1"/>
</dbReference>
<name>LYTN_STAAS</name>
<comment type="function">
    <text evidence="1">Probably involved in peptidoglycan hydrolysis.</text>
</comment>
<comment type="subcellular location">
    <subcellularLocation>
        <location evidence="5">Secreted</location>
    </subcellularLocation>
</comment>
<comment type="sequence caution" evidence="5">
    <conflict type="erroneous initiation">
        <sequence resource="EMBL-CDS" id="CAG42958"/>
    </conflict>
</comment>
<protein>
    <recommendedName>
        <fullName>Probable cell wall hydrolase LytN</fullName>
        <ecNumber>3.-.-.-</ecNumber>
    </recommendedName>
</protein>